<dbReference type="EMBL" id="AF036363">
    <property type="protein sequence ID" value="AAC34272.1"/>
    <property type="molecule type" value="Genomic_RNA"/>
</dbReference>
<dbReference type="EMBL" id="AF046093">
    <property type="protein sequence ID" value="AAC32095.1"/>
    <property type="molecule type" value="Genomic_RNA"/>
</dbReference>
<dbReference type="SMR" id="O56266"/>
<dbReference type="PRO" id="PR:O56266"/>
<dbReference type="Proteomes" id="UP000008587">
    <property type="component" value="Genome"/>
</dbReference>
<dbReference type="GO" id="GO:0042025">
    <property type="term" value="C:host cell nucleus"/>
    <property type="evidence" value="ECO:0007669"/>
    <property type="project" value="UniProtKB-SubCell"/>
</dbReference>
<dbReference type="GO" id="GO:0044423">
    <property type="term" value="C:virion component"/>
    <property type="evidence" value="ECO:0007669"/>
    <property type="project" value="UniProtKB-UniRule"/>
</dbReference>
<dbReference type="GO" id="GO:0003723">
    <property type="term" value="F:RNA binding"/>
    <property type="evidence" value="ECO:0007669"/>
    <property type="project" value="UniProtKB-UniRule"/>
</dbReference>
<dbReference type="GO" id="GO:0003968">
    <property type="term" value="F:RNA-directed RNA polymerase activity"/>
    <property type="evidence" value="ECO:0007669"/>
    <property type="project" value="UniProtKB-UniRule"/>
</dbReference>
<dbReference type="GO" id="GO:0006370">
    <property type="term" value="P:7-methylguanosine mRNA capping"/>
    <property type="evidence" value="ECO:0007669"/>
    <property type="project" value="UniProtKB-UniRule"/>
</dbReference>
<dbReference type="GO" id="GO:0075526">
    <property type="term" value="P:cap snatching"/>
    <property type="evidence" value="ECO:0007669"/>
    <property type="project" value="UniProtKB-UniRule"/>
</dbReference>
<dbReference type="GO" id="GO:0006351">
    <property type="term" value="P:DNA-templated transcription"/>
    <property type="evidence" value="ECO:0007669"/>
    <property type="project" value="UniProtKB-UniRule"/>
</dbReference>
<dbReference type="GO" id="GO:0039657">
    <property type="term" value="P:symbiont-mediated suppression of host gene expression"/>
    <property type="evidence" value="ECO:0007669"/>
    <property type="project" value="UniProtKB-KW"/>
</dbReference>
<dbReference type="GO" id="GO:0039523">
    <property type="term" value="P:symbiont-mediated suppression of host mRNA transcription via inhibition of RNA polymerase II activity"/>
    <property type="evidence" value="ECO:0007669"/>
    <property type="project" value="UniProtKB-UniRule"/>
</dbReference>
<dbReference type="GO" id="GO:0039694">
    <property type="term" value="P:viral RNA genome replication"/>
    <property type="evidence" value="ECO:0007669"/>
    <property type="project" value="InterPro"/>
</dbReference>
<dbReference type="FunFam" id="3.30.30.90:FF:000001">
    <property type="entry name" value="Polymerase basic protein 2"/>
    <property type="match status" value="1"/>
</dbReference>
<dbReference type="Gene3D" id="3.30.30.90">
    <property type="entry name" value="Polymerase Basic Protein 2, C-terminal domain"/>
    <property type="match status" value="1"/>
</dbReference>
<dbReference type="HAMAP" id="MF_04062">
    <property type="entry name" value="INV_PB2"/>
    <property type="match status" value="1"/>
</dbReference>
<dbReference type="InterPro" id="IPR049110">
    <property type="entry name" value="Flu_PB2_2nd"/>
</dbReference>
<dbReference type="InterPro" id="IPR049114">
    <property type="entry name" value="Flu_PB2_6th"/>
</dbReference>
<dbReference type="InterPro" id="IPR049115">
    <property type="entry name" value="Flu_PB2_C"/>
</dbReference>
<dbReference type="InterPro" id="IPR048298">
    <property type="entry name" value="Flu_PB2_CAP-bd"/>
</dbReference>
<dbReference type="InterPro" id="IPR049111">
    <property type="entry name" value="Flu_PB2_middle"/>
</dbReference>
<dbReference type="InterPro" id="IPR049106">
    <property type="entry name" value="Flu_PB2_N"/>
</dbReference>
<dbReference type="InterPro" id="IPR001591">
    <property type="entry name" value="INV_PB2"/>
</dbReference>
<dbReference type="InterPro" id="IPR049113">
    <property type="entry name" value="PB2_helical"/>
</dbReference>
<dbReference type="InterPro" id="IPR037258">
    <property type="entry name" value="PDB2_C"/>
</dbReference>
<dbReference type="Pfam" id="PF20947">
    <property type="entry name" value="Flu_PB2_1st"/>
    <property type="match status" value="1"/>
</dbReference>
<dbReference type="Pfam" id="PF20948">
    <property type="entry name" value="Flu_PB2_2nd"/>
    <property type="match status" value="1"/>
</dbReference>
<dbReference type="Pfam" id="PF20949">
    <property type="entry name" value="Flu_PB2_3rd"/>
    <property type="match status" value="1"/>
</dbReference>
<dbReference type="Pfam" id="PF20950">
    <property type="entry name" value="Flu_PB2_4th"/>
    <property type="match status" value="1"/>
</dbReference>
<dbReference type="Pfam" id="PF00604">
    <property type="entry name" value="Flu_PB2_5th"/>
    <property type="match status" value="1"/>
</dbReference>
<dbReference type="Pfam" id="PF20951">
    <property type="entry name" value="Flu_PB2_6th"/>
    <property type="match status" value="1"/>
</dbReference>
<dbReference type="Pfam" id="PF20952">
    <property type="entry name" value="Flu_PB2_7th"/>
    <property type="match status" value="1"/>
</dbReference>
<dbReference type="SUPFAM" id="SSF160453">
    <property type="entry name" value="PB2 C-terminal domain-like"/>
    <property type="match status" value="1"/>
</dbReference>
<organism>
    <name type="scientific">Influenza A virus (strain A/Hong Kong/156/1997 H5N1 genotype Gs/Gd)</name>
    <dbReference type="NCBI Taxonomy" id="130763"/>
    <lineage>
        <taxon>Viruses</taxon>
        <taxon>Riboviria</taxon>
        <taxon>Orthornavirae</taxon>
        <taxon>Negarnaviricota</taxon>
        <taxon>Polyploviricotina</taxon>
        <taxon>Insthoviricetes</taxon>
        <taxon>Articulavirales</taxon>
        <taxon>Orthomyxoviridae</taxon>
        <taxon>Alphainfluenzavirus</taxon>
        <taxon>Alphainfluenzavirus influenzae</taxon>
        <taxon>Influenza A virus</taxon>
    </lineage>
</organism>
<organismHost>
    <name type="scientific">Aves</name>
    <dbReference type="NCBI Taxonomy" id="8782"/>
</organismHost>
<organismHost>
    <name type="scientific">Felis catus</name>
    <name type="common">Cat</name>
    <name type="synonym">Felis silvestris catus</name>
    <dbReference type="NCBI Taxonomy" id="9685"/>
</organismHost>
<organismHost>
    <name type="scientific">Homo sapiens</name>
    <name type="common">Human</name>
    <dbReference type="NCBI Taxonomy" id="9606"/>
</organismHost>
<organismHost>
    <name type="scientific">Panthera pardus</name>
    <name type="common">Leopard</name>
    <name type="synonym">Felis pardus</name>
    <dbReference type="NCBI Taxonomy" id="9691"/>
</organismHost>
<organismHost>
    <name type="scientific">Panthera tigris</name>
    <name type="common">Tiger</name>
    <dbReference type="NCBI Taxonomy" id="9694"/>
</organismHost>
<organismHost>
    <name type="scientific">Sus scrofa</name>
    <name type="common">Pig</name>
    <dbReference type="NCBI Taxonomy" id="9823"/>
</organismHost>
<gene>
    <name evidence="1" type="primary">PB2</name>
</gene>
<keyword id="KW-1157">Cap snatching</keyword>
<keyword id="KW-1262">Eukaryotic host gene expression shutoff by virus</keyword>
<keyword id="KW-1191">Eukaryotic host transcription shutoff by virus</keyword>
<keyword id="KW-1190">Host gene expression shutoff by virus</keyword>
<keyword id="KW-1048">Host nucleus</keyword>
<keyword id="KW-0945">Host-virus interaction</keyword>
<keyword id="KW-1104">Inhibition of host RNA polymerase II by virus</keyword>
<keyword id="KW-0506">mRNA capping</keyword>
<keyword id="KW-0507">mRNA processing</keyword>
<keyword id="KW-1195">Viral transcription</keyword>
<keyword id="KW-0946">Virion</keyword>
<feature type="chain" id="PRO_0000078823" description="Polymerase basic protein 2">
    <location>
        <begin position="1"/>
        <end position="759"/>
    </location>
</feature>
<feature type="short sequence motif" description="Nuclear localization signal" evidence="1">
    <location>
        <begin position="736"/>
        <end position="739"/>
    </location>
</feature>
<feature type="site" description="Avian adaptation" evidence="1">
    <location>
        <position position="627"/>
    </location>
</feature>
<feature type="sequence conflict" description="In Ref. 2; AAC32095." ref="2">
    <original>R</original>
    <variation>G</variation>
    <location>
        <position position="727"/>
    </location>
</feature>
<reference key="1">
    <citation type="journal article" date="1998" name="Science">
        <title>Characterization of an avian influenza A (H5N1) virus isolated from a child with a fatal respiratory illness.</title>
        <authorList>
            <person name="Subbarao K."/>
            <person name="Klimov A."/>
            <person name="Katz J."/>
            <person name="Regnery H."/>
            <person name="Lim W."/>
            <person name="Hall H."/>
            <person name="Perdue M."/>
            <person name="Swayne D."/>
            <person name="Bender C."/>
            <person name="Huang J."/>
            <person name="Hemphill M."/>
            <person name="Rowe T."/>
            <person name="Shaw M."/>
            <person name="Xu X."/>
            <person name="Fukuda K."/>
            <person name="Cox N."/>
        </authorList>
    </citation>
    <scope>NUCLEOTIDE SEQUENCE [GENOMIC RNA]</scope>
</reference>
<reference key="2">
    <citation type="journal article" date="1998" name="J. Virol.">
        <title>Comparisons of highly virulent H5N1 influenza A viruses isolated from humans and chickens from Hong Kong.</title>
        <authorList>
            <person name="Suarez D.L."/>
            <person name="Perdue M.L."/>
            <person name="Cox N."/>
            <person name="Rowe T."/>
            <person name="Bender C."/>
            <person name="Huang J."/>
            <person name="Swayne D.E."/>
        </authorList>
    </citation>
    <scope>NUCLEOTIDE SEQUENCE [GENOMIC RNA] OF 1-749</scope>
</reference>
<accession>O56266</accession>
<accession>O89751</accession>
<name>PB2_I97A1</name>
<proteinExistence type="inferred from homology"/>
<comment type="function">
    <text evidence="1">Plays an essential role in transcription initiation and cap-stealing mechanism, in which cellular capped pre-mRNAs are used to generate primers for viral transcription. Recognizes and binds the 7-methylguanosine-containing cap of the target pre-RNA which is subsequently cleaved after 10-13 nucleotides by the viral protein PA. Plays a role in the initiation of the viral genome replication and modulates the activity of the ribonucleoprotein (RNP) complex.</text>
</comment>
<comment type="subunit">
    <text evidence="1">Influenza RNA polymerase is composed of three subunits: PB1, PB2 and PA. Interacts (via N-terminus) with PB1 (via C-terminus). Interacts with nucleoprotein NP (via N-terminus).</text>
</comment>
<comment type="subcellular location">
    <subcellularLocation>
        <location evidence="1">Virion</location>
    </subcellularLocation>
    <subcellularLocation>
        <location evidence="1">Host nucleus</location>
    </subcellularLocation>
</comment>
<comment type="similarity">
    <text evidence="1">Belongs to the influenza viruses PB2 family.</text>
</comment>
<protein>
    <recommendedName>
        <fullName evidence="1">Polymerase basic protein 2</fullName>
    </recommendedName>
    <alternativeName>
        <fullName evidence="1">RNA-directed RNA polymerase subunit P3</fullName>
    </alternativeName>
</protein>
<sequence>MERIKELRDLMSQSRTREILTKTTVDHMAIIKKYTSGRQEKNPALRMKWMMAMKYPITADKRIMEMIPERNEQGQTLWSKTNDAGSDRVMVSPLAVTWWNRNGPTTSTVHYPKVYKTYFEKVERLKHGTFGPVHFRNQVKIRRRVDMNPGHADLSAKEAQDVIMEVVFPNEVGARILTSESQLTITKEKREELKNCNISPLMVAYMLERELVRKTRFLPVAGGTSSVYIEVLHLTQGTCWEQMYTPGGEVRNDDVDQSLIIAARNIVRRATVSADPLASLLEMCHSTQIGGVRMVDILKQNPTEEQAVDICKAAMGLRISSSFSFGGFTFKRTKGFSVKREEEVLTGNLQTLKIKVHEGYEEFTMVGRRATAILRKATRRMIQLIVSGRDEQSIAEAIIVAMVFSQEDCMIKAVRGDLNFVNRANQRLNPMHQLLRHFQKDAKVLFQNWGIEPIDNVMGMIGILPDMTPSTEMSLRGVRVSKMGVDEYSSTERVVVSIDRFLRVRDQQGNVLLSPEEVSETQGMEKLTITYSSSMMWEINGPESVLVNTYQWIIRNWETVKIQWSQEPTMLYNKMEFEPFQSLVPKAARSQYSGFVRTLFQQMRDVLGTFDTVQIIKLLPFAAAPPEQSRMQFSSLTVNVRGSGMRILVRGNSPAFNYNKTTKRLTILGKDAGALTEDPDEGTAGVESAVLRGFLILGKEDKRYGPALSINELSNLTKGEKANVLIRQGDVVLVMKRKRDSSILTDSQTATKRIRMAIN</sequence>
<evidence type="ECO:0000255" key="1">
    <source>
        <dbReference type="HAMAP-Rule" id="MF_04062"/>
    </source>
</evidence>